<accession>A0Q4H9</accession>
<evidence type="ECO:0000250" key="1"/>
<evidence type="ECO:0000255" key="2">
    <source>
        <dbReference type="HAMAP-Rule" id="MF_00403"/>
    </source>
</evidence>
<evidence type="ECO:0000256" key="3">
    <source>
        <dbReference type="SAM" id="MobiDB-lite"/>
    </source>
</evidence>
<evidence type="ECO:0000305" key="4"/>
<keyword id="KW-0488">Methylation</keyword>
<keyword id="KW-0687">Ribonucleoprotein</keyword>
<keyword id="KW-0689">Ribosomal protein</keyword>
<keyword id="KW-0694">RNA-binding</keyword>
<keyword id="KW-0699">rRNA-binding</keyword>
<keyword id="KW-0820">tRNA-binding</keyword>
<gene>
    <name evidence="2" type="primary">rpsL</name>
    <name type="ordered locus">FTN_0235</name>
</gene>
<name>RS12_FRATN</name>
<reference key="1">
    <citation type="journal article" date="2007" name="Genome Biol.">
        <title>Comparison of Francisella tularensis genomes reveals evolutionary events associated with the emergence of human pathogenic strains.</title>
        <authorList>
            <person name="Rohmer L."/>
            <person name="Fong C."/>
            <person name="Abmayr S."/>
            <person name="Wasnick M."/>
            <person name="Larson Freeman T.J."/>
            <person name="Radey M."/>
            <person name="Guina T."/>
            <person name="Svensson K."/>
            <person name="Hayden H.S."/>
            <person name="Jacobs M."/>
            <person name="Gallagher L.A."/>
            <person name="Manoil C."/>
            <person name="Ernst R.K."/>
            <person name="Drees B."/>
            <person name="Buckley D."/>
            <person name="Haugen E."/>
            <person name="Bovee D."/>
            <person name="Zhou Y."/>
            <person name="Chang J."/>
            <person name="Levy R."/>
            <person name="Lim R."/>
            <person name="Gillett W."/>
            <person name="Guenthener D."/>
            <person name="Kang A."/>
            <person name="Shaffer S.A."/>
            <person name="Taylor G."/>
            <person name="Chen J."/>
            <person name="Gallis B."/>
            <person name="D'Argenio D.A."/>
            <person name="Forsman M."/>
            <person name="Olson M.V."/>
            <person name="Goodlett D.R."/>
            <person name="Kaul R."/>
            <person name="Miller S.I."/>
            <person name="Brittnacher M.J."/>
        </authorList>
    </citation>
    <scope>NUCLEOTIDE SEQUENCE [LARGE SCALE GENOMIC DNA]</scope>
    <source>
        <strain>U112</strain>
    </source>
</reference>
<organism>
    <name type="scientific">Francisella tularensis subsp. novicida (strain U112)</name>
    <dbReference type="NCBI Taxonomy" id="401614"/>
    <lineage>
        <taxon>Bacteria</taxon>
        <taxon>Pseudomonadati</taxon>
        <taxon>Pseudomonadota</taxon>
        <taxon>Gammaproteobacteria</taxon>
        <taxon>Thiotrichales</taxon>
        <taxon>Francisellaceae</taxon>
        <taxon>Francisella</taxon>
    </lineage>
</organism>
<dbReference type="EMBL" id="CP000439">
    <property type="protein sequence ID" value="ABK89144.1"/>
    <property type="molecule type" value="Genomic_DNA"/>
</dbReference>
<dbReference type="RefSeq" id="WP_003035357.1">
    <property type="nucleotide sequence ID" value="NZ_CP009633.1"/>
</dbReference>
<dbReference type="SMR" id="A0Q4H9"/>
<dbReference type="GeneID" id="75264265"/>
<dbReference type="KEGG" id="ftn:FTN_0235"/>
<dbReference type="KEGG" id="ftx:AW25_1807"/>
<dbReference type="BioCyc" id="FTUL401614:G1G75-246-MONOMER"/>
<dbReference type="Proteomes" id="UP000000762">
    <property type="component" value="Chromosome"/>
</dbReference>
<dbReference type="GO" id="GO:0015935">
    <property type="term" value="C:small ribosomal subunit"/>
    <property type="evidence" value="ECO:0007669"/>
    <property type="project" value="InterPro"/>
</dbReference>
<dbReference type="GO" id="GO:0019843">
    <property type="term" value="F:rRNA binding"/>
    <property type="evidence" value="ECO:0007669"/>
    <property type="project" value="UniProtKB-UniRule"/>
</dbReference>
<dbReference type="GO" id="GO:0003735">
    <property type="term" value="F:structural constituent of ribosome"/>
    <property type="evidence" value="ECO:0007669"/>
    <property type="project" value="InterPro"/>
</dbReference>
<dbReference type="GO" id="GO:0000049">
    <property type="term" value="F:tRNA binding"/>
    <property type="evidence" value="ECO:0007669"/>
    <property type="project" value="UniProtKB-UniRule"/>
</dbReference>
<dbReference type="GO" id="GO:0006412">
    <property type="term" value="P:translation"/>
    <property type="evidence" value="ECO:0007669"/>
    <property type="project" value="UniProtKB-UniRule"/>
</dbReference>
<dbReference type="CDD" id="cd03368">
    <property type="entry name" value="Ribosomal_S12"/>
    <property type="match status" value="1"/>
</dbReference>
<dbReference type="FunFam" id="2.40.50.140:FF:000001">
    <property type="entry name" value="30S ribosomal protein S12"/>
    <property type="match status" value="1"/>
</dbReference>
<dbReference type="Gene3D" id="2.40.50.140">
    <property type="entry name" value="Nucleic acid-binding proteins"/>
    <property type="match status" value="1"/>
</dbReference>
<dbReference type="HAMAP" id="MF_00403_B">
    <property type="entry name" value="Ribosomal_uS12_B"/>
    <property type="match status" value="1"/>
</dbReference>
<dbReference type="InterPro" id="IPR012340">
    <property type="entry name" value="NA-bd_OB-fold"/>
</dbReference>
<dbReference type="InterPro" id="IPR006032">
    <property type="entry name" value="Ribosomal_uS12"/>
</dbReference>
<dbReference type="InterPro" id="IPR005679">
    <property type="entry name" value="Ribosomal_uS12_bac"/>
</dbReference>
<dbReference type="NCBIfam" id="TIGR00981">
    <property type="entry name" value="rpsL_bact"/>
    <property type="match status" value="1"/>
</dbReference>
<dbReference type="PANTHER" id="PTHR11652">
    <property type="entry name" value="30S RIBOSOMAL PROTEIN S12 FAMILY MEMBER"/>
    <property type="match status" value="1"/>
</dbReference>
<dbReference type="Pfam" id="PF00164">
    <property type="entry name" value="Ribosom_S12_S23"/>
    <property type="match status" value="1"/>
</dbReference>
<dbReference type="PIRSF" id="PIRSF002133">
    <property type="entry name" value="Ribosomal_S12/S23"/>
    <property type="match status" value="1"/>
</dbReference>
<dbReference type="PRINTS" id="PR01034">
    <property type="entry name" value="RIBOSOMALS12"/>
</dbReference>
<dbReference type="SUPFAM" id="SSF50249">
    <property type="entry name" value="Nucleic acid-binding proteins"/>
    <property type="match status" value="1"/>
</dbReference>
<dbReference type="PROSITE" id="PS00055">
    <property type="entry name" value="RIBOSOMAL_S12"/>
    <property type="match status" value="1"/>
</dbReference>
<protein>
    <recommendedName>
        <fullName evidence="2">Small ribosomal subunit protein uS12</fullName>
    </recommendedName>
    <alternativeName>
        <fullName evidence="4">30S ribosomal protein S12</fullName>
    </alternativeName>
</protein>
<proteinExistence type="inferred from homology"/>
<comment type="function">
    <text evidence="2">With S4 and S5 plays an important role in translational accuracy.</text>
</comment>
<comment type="function">
    <text evidence="2">Interacts with and stabilizes bases of the 16S rRNA that are involved in tRNA selection in the A site and with the mRNA backbone. Located at the interface of the 30S and 50S subunits, it traverses the body of the 30S subunit contacting proteins on the other side and probably holding the rRNA structure together. The combined cluster of proteins S8, S12 and S17 appears to hold together the shoulder and platform of the 30S subunit.</text>
</comment>
<comment type="subunit">
    <text evidence="2">Part of the 30S ribosomal subunit. Contacts proteins S8 and S17. May interact with IF1 in the 30S initiation complex.</text>
</comment>
<comment type="similarity">
    <text evidence="2">Belongs to the universal ribosomal protein uS12 family.</text>
</comment>
<feature type="chain" id="PRO_0000295978" description="Small ribosomal subunit protein uS12">
    <location>
        <begin position="1"/>
        <end position="124"/>
    </location>
</feature>
<feature type="region of interest" description="Disordered" evidence="3">
    <location>
        <begin position="102"/>
        <end position="124"/>
    </location>
</feature>
<feature type="compositionally biased region" description="Basic residues" evidence="3">
    <location>
        <begin position="109"/>
        <end position="124"/>
    </location>
</feature>
<feature type="modified residue" description="3-methylthioaspartic acid" evidence="1">
    <location>
        <position position="89"/>
    </location>
</feature>
<sequence length="124" mass="13715">MATINQLVNNPRKRSVVKSKVPALKACPQRRGVCTRVYTTTPKKPNSALRKVARVRLTSGFEVTSYIGGEGHNLQEHSVVLIRGGRVKDLPGVRYHIVRGALDTSGVNNRKHGRSKYGTKRPKS</sequence>